<protein>
    <recommendedName>
        <fullName>Aquaporin TIP2-1</fullName>
    </recommendedName>
    <alternativeName>
        <fullName>Delta-tonoplast intrinsic protein</fullName>
        <shortName>Delta-TIP</shortName>
    </alternativeName>
    <alternativeName>
        <fullName>Tonoplast intrinsic protein 2-1</fullName>
        <shortName>AtTIP2;1</shortName>
    </alternativeName>
    <component>
        <recommendedName>
            <fullName>Aquaporin TIP2-1, N-terminally processed</fullName>
        </recommendedName>
    </component>
</protein>
<feature type="chain" id="PRO_0000425759" description="Aquaporin TIP2-1">
    <location>
        <begin position="1"/>
        <end position="250"/>
    </location>
</feature>
<feature type="initiator methionine" description="Removed; alternate" evidence="12">
    <location>
        <position position="1"/>
    </location>
</feature>
<feature type="chain" id="PRO_0000064011" description="Aquaporin TIP2-1, N-terminally processed">
    <location>
        <begin position="2"/>
        <end position="250"/>
    </location>
</feature>
<feature type="topological domain" description="Cytoplasmic" evidence="3">
    <location>
        <begin position="1"/>
        <end position="20"/>
    </location>
</feature>
<feature type="transmembrane region" description="Helical; Name=1" evidence="3">
    <location>
        <begin position="21"/>
        <end position="41"/>
    </location>
</feature>
<feature type="topological domain" description="Vacuolar" evidence="3">
    <location>
        <begin position="42"/>
        <end position="54"/>
    </location>
</feature>
<feature type="transmembrane region" description="Helical; Name=2" evidence="3">
    <location>
        <begin position="55"/>
        <end position="75"/>
    </location>
</feature>
<feature type="topological domain" description="Cytoplasmic" evidence="3">
    <location>
        <begin position="76"/>
        <end position="98"/>
    </location>
</feature>
<feature type="transmembrane region" description="Helical; Name=3" evidence="3">
    <location>
        <begin position="99"/>
        <end position="119"/>
    </location>
</feature>
<feature type="topological domain" description="Vacuolar" evidence="3">
    <location>
        <begin position="120"/>
        <end position="141"/>
    </location>
</feature>
<feature type="transmembrane region" description="Helical; Name=4" evidence="3">
    <location>
        <begin position="142"/>
        <end position="162"/>
    </location>
</feature>
<feature type="topological domain" description="Cytoplasmic" evidence="3">
    <location>
        <begin position="163"/>
        <end position="168"/>
    </location>
</feature>
<feature type="transmembrane region" description="Helical; Name=5" evidence="3">
    <location>
        <begin position="169"/>
        <end position="189"/>
    </location>
</feature>
<feature type="topological domain" description="Vacuolar" evidence="3">
    <location>
        <begin position="190"/>
        <end position="215"/>
    </location>
</feature>
<feature type="transmembrane region" description="Helical; Name=6" evidence="3">
    <location>
        <begin position="216"/>
        <end position="236"/>
    </location>
</feature>
<feature type="topological domain" description="Cytoplasmic" evidence="3">
    <location>
        <begin position="237"/>
        <end position="250"/>
    </location>
</feature>
<feature type="short sequence motif" description="NPA 1">
    <location>
        <begin position="83"/>
        <end position="85"/>
    </location>
</feature>
<feature type="short sequence motif" description="NPA 2">
    <location>
        <begin position="197"/>
        <end position="199"/>
    </location>
</feature>
<feature type="modified residue" description="N-acetylmethionine" evidence="2">
    <location>
        <position position="1"/>
    </location>
</feature>
<feature type="modified residue" description="N-acetylalanine; in Aquaporin TIP2-1, N-terminally processed" evidence="12">
    <location>
        <position position="2"/>
    </location>
</feature>
<feature type="mutagenesis site" description="Reduces the mercury-sensitivity." evidence="10">
    <original>C</original>
    <variation>S</variation>
    <location>
        <position position="116"/>
    </location>
</feature>
<feature type="sequence conflict" description="In Ref. 6; CAA79093." evidence="11" ref="6">
    <original>I</original>
    <variation>Y</variation>
    <location>
        <position position="40"/>
    </location>
</feature>
<feature type="sequence conflict" description="In Ref. 6; CAA79093." evidence="11" ref="6">
    <original>W</original>
    <variation>L</variation>
    <location>
        <position position="105"/>
    </location>
</feature>
<feature type="sequence conflict" description="In Ref. 8; CAA82298." evidence="11" ref="8">
    <original>GGL</original>
    <variation>KTQ</variation>
    <location>
        <begin position="124"/>
        <end position="126"/>
    </location>
</feature>
<feature type="sequence conflict" description="In Ref. 4; AAL38357/AAM10184." evidence="11" ref="4">
    <original>G</original>
    <variation>E</variation>
    <location>
        <position position="226"/>
    </location>
</feature>
<feature type="helix" evidence="13">
    <location>
        <begin position="9"/>
        <end position="12"/>
    </location>
</feature>
<feature type="helix" evidence="13">
    <location>
        <begin position="15"/>
        <end position="46"/>
    </location>
</feature>
<feature type="helix" evidence="13">
    <location>
        <begin position="53"/>
        <end position="74"/>
    </location>
</feature>
<feature type="turn" evidence="13">
    <location>
        <begin position="75"/>
        <end position="78"/>
    </location>
</feature>
<feature type="helix" evidence="13">
    <location>
        <begin position="84"/>
        <end position="92"/>
    </location>
</feature>
<feature type="helix" evidence="13">
    <location>
        <begin position="98"/>
        <end position="122"/>
    </location>
</feature>
<feature type="helix" evidence="13">
    <location>
        <begin position="139"/>
        <end position="160"/>
    </location>
</feature>
<feature type="helix" evidence="13">
    <location>
        <begin position="169"/>
        <end position="188"/>
    </location>
</feature>
<feature type="turn" evidence="13">
    <location>
        <begin position="189"/>
        <end position="192"/>
    </location>
</feature>
<feature type="helix" evidence="13">
    <location>
        <begin position="198"/>
        <end position="208"/>
    </location>
</feature>
<feature type="turn" evidence="13">
    <location>
        <begin position="212"/>
        <end position="215"/>
    </location>
</feature>
<feature type="helix" evidence="13">
    <location>
        <begin position="216"/>
        <end position="235"/>
    </location>
</feature>
<name>TIP21_ARATH</name>
<keyword id="KW-0002">3D-structure</keyword>
<keyword id="KW-0007">Acetylation</keyword>
<keyword id="KW-0472">Membrane</keyword>
<keyword id="KW-1185">Reference proteome</keyword>
<keyword id="KW-0677">Repeat</keyword>
<keyword id="KW-0812">Transmembrane</keyword>
<keyword id="KW-1133">Transmembrane helix</keyword>
<keyword id="KW-0813">Transport</keyword>
<keyword id="KW-0926">Vacuole</keyword>
<dbReference type="EMBL" id="U39485">
    <property type="protein sequence ID" value="AAC49281.1"/>
    <property type="molecule type" value="mRNA"/>
</dbReference>
<dbReference type="EMBL" id="U39486">
    <property type="protein sequence ID" value="AAC49992.1"/>
    <property type="molecule type" value="Genomic_DNA"/>
</dbReference>
<dbReference type="EMBL" id="AB023046">
    <property type="protein sequence ID" value="BAB01264.1"/>
    <property type="molecule type" value="Genomic_DNA"/>
</dbReference>
<dbReference type="EMBL" id="CP002686">
    <property type="protein sequence ID" value="AEE75789.1"/>
    <property type="molecule type" value="Genomic_DNA"/>
</dbReference>
<dbReference type="EMBL" id="AY065181">
    <property type="protein sequence ID" value="AAL38357.1"/>
    <property type="molecule type" value="mRNA"/>
</dbReference>
<dbReference type="EMBL" id="AY081622">
    <property type="protein sequence ID" value="AAM10184.1"/>
    <property type="molecule type" value="mRNA"/>
</dbReference>
<dbReference type="EMBL" id="AK229954">
    <property type="protein sequence ID" value="BAF01780.1"/>
    <property type="molecule type" value="mRNA"/>
</dbReference>
<dbReference type="EMBL" id="AY085921">
    <property type="protein sequence ID" value="AAM63133.1"/>
    <property type="molecule type" value="mRNA"/>
</dbReference>
<dbReference type="EMBL" id="Z18064">
    <property type="protein sequence ID" value="CAA79093.1"/>
    <property type="status" value="ALT_INIT"/>
    <property type="molecule type" value="mRNA"/>
</dbReference>
<dbReference type="EMBL" id="Z29043">
    <property type="protein sequence ID" value="CAA82298.1"/>
    <property type="status" value="ALT_INIT"/>
    <property type="molecule type" value="mRNA"/>
</dbReference>
<dbReference type="EMBL" id="Z29044">
    <property type="protein sequence ID" value="CAA82299.1"/>
    <property type="molecule type" value="mRNA"/>
</dbReference>
<dbReference type="PDB" id="5I32">
    <property type="method" value="X-ray"/>
    <property type="resolution" value="1.18 A"/>
    <property type="chains" value="A=2-250"/>
</dbReference>
<dbReference type="PDBsum" id="5I32"/>
<dbReference type="SMR" id="Q41951"/>
<dbReference type="BioGRID" id="6204">
    <property type="interactions" value="6"/>
</dbReference>
<dbReference type="DIP" id="DIP-61927N"/>
<dbReference type="FunCoup" id="Q41951">
    <property type="interactions" value="555"/>
</dbReference>
<dbReference type="IntAct" id="Q41951">
    <property type="interactions" value="4"/>
</dbReference>
<dbReference type="STRING" id="3702.Q41951"/>
<dbReference type="TCDB" id="1.A.8.10.10">
    <property type="family name" value="the major intrinsic protein (mip) family"/>
</dbReference>
<dbReference type="iPTMnet" id="Q41951"/>
<dbReference type="PaxDb" id="3702-AT3G16240.1"/>
<dbReference type="ProteomicsDB" id="232426"/>
<dbReference type="EnsemblPlants" id="AT3G16240.1">
    <property type="protein sequence ID" value="AT3G16240.1"/>
    <property type="gene ID" value="AT3G16240"/>
</dbReference>
<dbReference type="Gramene" id="AT3G16240.1">
    <property type="protein sequence ID" value="AT3G16240.1"/>
    <property type="gene ID" value="AT3G16240"/>
</dbReference>
<dbReference type="KEGG" id="ath:AT3G16240"/>
<dbReference type="Araport" id="AT3G16240"/>
<dbReference type="TAIR" id="AT3G16240">
    <property type="gene designation" value="DELTA-TIP"/>
</dbReference>
<dbReference type="eggNOG" id="KOG0223">
    <property type="taxonomic scope" value="Eukaryota"/>
</dbReference>
<dbReference type="HOGENOM" id="CLU_020019_3_4_1"/>
<dbReference type="InParanoid" id="Q41951"/>
<dbReference type="OMA" id="IACMAEI"/>
<dbReference type="OrthoDB" id="3222at2759"/>
<dbReference type="PhylomeDB" id="Q41951"/>
<dbReference type="PRO" id="PR:Q41951"/>
<dbReference type="Proteomes" id="UP000006548">
    <property type="component" value="Chromosome 3"/>
</dbReference>
<dbReference type="ExpressionAtlas" id="Q41951">
    <property type="expression patterns" value="baseline and differential"/>
</dbReference>
<dbReference type="GO" id="GO:0042807">
    <property type="term" value="C:central vacuole"/>
    <property type="evidence" value="ECO:0000314"/>
    <property type="project" value="TAIR"/>
</dbReference>
<dbReference type="GO" id="GO:0009941">
    <property type="term" value="C:chloroplast envelope"/>
    <property type="evidence" value="ECO:0007005"/>
    <property type="project" value="TAIR"/>
</dbReference>
<dbReference type="GO" id="GO:0005794">
    <property type="term" value="C:Golgi apparatus"/>
    <property type="evidence" value="ECO:0007005"/>
    <property type="project" value="TAIR"/>
</dbReference>
<dbReference type="GO" id="GO:0009505">
    <property type="term" value="C:plant-type cell wall"/>
    <property type="evidence" value="ECO:0007005"/>
    <property type="project" value="TAIR"/>
</dbReference>
<dbReference type="GO" id="GO:0000325">
    <property type="term" value="C:plant-type vacuole"/>
    <property type="evidence" value="ECO:0007005"/>
    <property type="project" value="TAIR"/>
</dbReference>
<dbReference type="GO" id="GO:0009705">
    <property type="term" value="C:plant-type vacuole membrane"/>
    <property type="evidence" value="ECO:0000314"/>
    <property type="project" value="TAIR"/>
</dbReference>
<dbReference type="GO" id="GO:0005886">
    <property type="term" value="C:plasma membrane"/>
    <property type="evidence" value="ECO:0007005"/>
    <property type="project" value="TAIR"/>
</dbReference>
<dbReference type="GO" id="GO:0009506">
    <property type="term" value="C:plasmodesma"/>
    <property type="evidence" value="ECO:0007005"/>
    <property type="project" value="TAIR"/>
</dbReference>
<dbReference type="GO" id="GO:0000326">
    <property type="term" value="C:protein storage vacuole"/>
    <property type="evidence" value="ECO:0000314"/>
    <property type="project" value="TAIR"/>
</dbReference>
<dbReference type="GO" id="GO:0042802">
    <property type="term" value="F:identical protein binding"/>
    <property type="evidence" value="ECO:0000353"/>
    <property type="project" value="IntAct"/>
</dbReference>
<dbReference type="GO" id="GO:0015200">
    <property type="term" value="F:methylammonium transmembrane transporter activity"/>
    <property type="evidence" value="ECO:0000314"/>
    <property type="project" value="TAIR"/>
</dbReference>
<dbReference type="GO" id="GO:0015250">
    <property type="term" value="F:water channel activity"/>
    <property type="evidence" value="ECO:0000314"/>
    <property type="project" value="TAIR"/>
</dbReference>
<dbReference type="GO" id="GO:0006833">
    <property type="term" value="P:water transport"/>
    <property type="evidence" value="ECO:0000314"/>
    <property type="project" value="TAIR"/>
</dbReference>
<dbReference type="CDD" id="cd00333">
    <property type="entry name" value="MIP"/>
    <property type="match status" value="1"/>
</dbReference>
<dbReference type="FunFam" id="1.20.1080.10:FF:000002">
    <property type="entry name" value="Probable aquaporin TIP1-1"/>
    <property type="match status" value="1"/>
</dbReference>
<dbReference type="Gene3D" id="1.20.1080.10">
    <property type="entry name" value="Glycerol uptake facilitator protein"/>
    <property type="match status" value="1"/>
</dbReference>
<dbReference type="InterPro" id="IPR023271">
    <property type="entry name" value="Aquaporin-like"/>
</dbReference>
<dbReference type="InterPro" id="IPR034294">
    <property type="entry name" value="Aquaporin_transptr"/>
</dbReference>
<dbReference type="InterPro" id="IPR000425">
    <property type="entry name" value="MIP"/>
</dbReference>
<dbReference type="InterPro" id="IPR022357">
    <property type="entry name" value="MIP_CS"/>
</dbReference>
<dbReference type="NCBIfam" id="TIGR00861">
    <property type="entry name" value="MIP"/>
    <property type="match status" value="1"/>
</dbReference>
<dbReference type="PANTHER" id="PTHR45665">
    <property type="entry name" value="AQUAPORIN-8"/>
    <property type="match status" value="1"/>
</dbReference>
<dbReference type="PANTHER" id="PTHR45665:SF9">
    <property type="entry name" value="AQUAPORIN-8"/>
    <property type="match status" value="1"/>
</dbReference>
<dbReference type="Pfam" id="PF00230">
    <property type="entry name" value="MIP"/>
    <property type="match status" value="1"/>
</dbReference>
<dbReference type="PRINTS" id="PR00783">
    <property type="entry name" value="MINTRINSICP"/>
</dbReference>
<dbReference type="SUPFAM" id="SSF81338">
    <property type="entry name" value="Aquaporin-like"/>
    <property type="match status" value="1"/>
</dbReference>
<dbReference type="PROSITE" id="PS00221">
    <property type="entry name" value="MIP"/>
    <property type="match status" value="1"/>
</dbReference>
<reference key="1">
    <citation type="journal article" date="1996" name="Plant Cell">
        <title>Characterization of a new vacuolar membrane aquaporin sensitive to mercury at a unique site.</title>
        <authorList>
            <person name="Daniels M.J."/>
            <person name="Chaumont F."/>
            <person name="Mirkov T.E."/>
            <person name="Chrispeels M.J."/>
        </authorList>
    </citation>
    <scope>NUCLEOTIDE SEQUENCE [GENOMIC DNA / MRNA]</scope>
    <scope>FUNCTION</scope>
    <scope>SUBCELLULAR LOCATION</scope>
    <scope>TISSUE SPECIFICITY</scope>
    <scope>MUTAGENESIS OF CYS-116</scope>
    <source>
        <strain>cv. Columbia</strain>
        <tissue>Etiolated seedling</tissue>
    </source>
</reference>
<reference key="2">
    <citation type="journal article" date="2000" name="DNA Res.">
        <title>Structural analysis of Arabidopsis thaliana chromosome 3. I. Sequence features of the regions of 4,504,864 bp covered by sixty P1 and TAC clones.</title>
        <authorList>
            <person name="Sato S."/>
            <person name="Nakamura Y."/>
            <person name="Kaneko T."/>
            <person name="Katoh T."/>
            <person name="Asamizu E."/>
            <person name="Tabata S."/>
        </authorList>
    </citation>
    <scope>NUCLEOTIDE SEQUENCE [LARGE SCALE GENOMIC DNA]</scope>
    <source>
        <strain>cv. Columbia</strain>
    </source>
</reference>
<reference key="3">
    <citation type="journal article" date="2017" name="Plant J.">
        <title>Araport11: a complete reannotation of the Arabidopsis thaliana reference genome.</title>
        <authorList>
            <person name="Cheng C.Y."/>
            <person name="Krishnakumar V."/>
            <person name="Chan A.P."/>
            <person name="Thibaud-Nissen F."/>
            <person name="Schobel S."/>
            <person name="Town C.D."/>
        </authorList>
    </citation>
    <scope>GENOME REANNOTATION</scope>
    <source>
        <strain>cv. Columbia</strain>
    </source>
</reference>
<reference key="4">
    <citation type="journal article" date="2003" name="Science">
        <title>Empirical analysis of transcriptional activity in the Arabidopsis genome.</title>
        <authorList>
            <person name="Yamada K."/>
            <person name="Lim J."/>
            <person name="Dale J.M."/>
            <person name="Chen H."/>
            <person name="Shinn P."/>
            <person name="Palm C.J."/>
            <person name="Southwick A.M."/>
            <person name="Wu H.C."/>
            <person name="Kim C.J."/>
            <person name="Nguyen M."/>
            <person name="Pham P.K."/>
            <person name="Cheuk R.F."/>
            <person name="Karlin-Newmann G."/>
            <person name="Liu S.X."/>
            <person name="Lam B."/>
            <person name="Sakano H."/>
            <person name="Wu T."/>
            <person name="Yu G."/>
            <person name="Miranda M."/>
            <person name="Quach H.L."/>
            <person name="Tripp M."/>
            <person name="Chang C.H."/>
            <person name="Lee J.M."/>
            <person name="Toriumi M.J."/>
            <person name="Chan M.M."/>
            <person name="Tang C.C."/>
            <person name="Onodera C.S."/>
            <person name="Deng J.M."/>
            <person name="Akiyama K."/>
            <person name="Ansari Y."/>
            <person name="Arakawa T."/>
            <person name="Banh J."/>
            <person name="Banno F."/>
            <person name="Bowser L."/>
            <person name="Brooks S.Y."/>
            <person name="Carninci P."/>
            <person name="Chao Q."/>
            <person name="Choy N."/>
            <person name="Enju A."/>
            <person name="Goldsmith A.D."/>
            <person name="Gurjal M."/>
            <person name="Hansen N.F."/>
            <person name="Hayashizaki Y."/>
            <person name="Johnson-Hopson C."/>
            <person name="Hsuan V.W."/>
            <person name="Iida K."/>
            <person name="Karnes M."/>
            <person name="Khan S."/>
            <person name="Koesema E."/>
            <person name="Ishida J."/>
            <person name="Jiang P.X."/>
            <person name="Jones T."/>
            <person name="Kawai J."/>
            <person name="Kamiya A."/>
            <person name="Meyers C."/>
            <person name="Nakajima M."/>
            <person name="Narusaka M."/>
            <person name="Seki M."/>
            <person name="Sakurai T."/>
            <person name="Satou M."/>
            <person name="Tamse R."/>
            <person name="Vaysberg M."/>
            <person name="Wallender E.K."/>
            <person name="Wong C."/>
            <person name="Yamamura Y."/>
            <person name="Yuan S."/>
            <person name="Shinozaki K."/>
            <person name="Davis R.W."/>
            <person name="Theologis A."/>
            <person name="Ecker J.R."/>
        </authorList>
    </citation>
    <scope>NUCLEOTIDE SEQUENCE [LARGE SCALE MRNA]</scope>
    <source>
        <strain>cv. Columbia</strain>
    </source>
</reference>
<reference key="5">
    <citation type="submission" date="2006-07" db="EMBL/GenBank/DDBJ databases">
        <title>Large-scale analysis of RIKEN Arabidopsis full-length (RAFL) cDNAs.</title>
        <authorList>
            <person name="Totoki Y."/>
            <person name="Seki M."/>
            <person name="Ishida J."/>
            <person name="Nakajima M."/>
            <person name="Enju A."/>
            <person name="Kamiya A."/>
            <person name="Narusaka M."/>
            <person name="Shin-i T."/>
            <person name="Nakagawa M."/>
            <person name="Sakamoto N."/>
            <person name="Oishi K."/>
            <person name="Kohara Y."/>
            <person name="Kobayashi M."/>
            <person name="Toyoda A."/>
            <person name="Sakaki Y."/>
            <person name="Sakurai T."/>
            <person name="Iida K."/>
            <person name="Akiyama K."/>
            <person name="Satou M."/>
            <person name="Toyoda T."/>
            <person name="Konagaya A."/>
            <person name="Carninci P."/>
            <person name="Kawai J."/>
            <person name="Hayashizaki Y."/>
            <person name="Shinozaki K."/>
        </authorList>
    </citation>
    <scope>NUCLEOTIDE SEQUENCE [LARGE SCALE MRNA]</scope>
    <source>
        <strain>cv. Columbia</strain>
    </source>
</reference>
<reference key="6">
    <citation type="submission" date="2002-03" db="EMBL/GenBank/DDBJ databases">
        <title>Full-length cDNA from Arabidopsis thaliana.</title>
        <authorList>
            <person name="Brover V.V."/>
            <person name="Troukhan M.E."/>
            <person name="Alexandrov N.A."/>
            <person name="Lu Y.-P."/>
            <person name="Flavell R.B."/>
            <person name="Feldmann K.A."/>
        </authorList>
    </citation>
    <scope>NUCLEOTIDE SEQUENCE [LARGE SCALE MRNA]</scope>
</reference>
<reference key="7">
    <citation type="journal article" date="1993" name="Plant J.">
        <title>An inventory of 1152 expressed sequence tags obtained by partial sequencing of cDNAs from Arabidopsis thaliana.</title>
        <authorList>
            <person name="Hoefte H."/>
            <person name="Desprez T."/>
            <person name="Amselem J."/>
            <person name="Chiapello H."/>
            <person name="Rouze P."/>
            <person name="Caboche M."/>
            <person name="Moisan A."/>
            <person name="Jourjon M.-F."/>
            <person name="Charpenteau J.-L."/>
            <person name="Berthomieu P."/>
            <person name="Guerrier D."/>
            <person name="Giraudat J."/>
            <person name="Quigley F."/>
            <person name="Thomas F."/>
            <person name="Yu D.-Y."/>
            <person name="Mache R."/>
            <person name="Raynal M."/>
            <person name="Cooke R."/>
            <person name="Grellet F."/>
            <person name="Delseny M."/>
            <person name="Parmentier Y."/>
            <person name="de Marcillac G."/>
            <person name="Gigot C."/>
            <person name="Fleck J."/>
            <person name="Philipps G."/>
            <person name="Axelos M."/>
            <person name="Bardet C."/>
            <person name="Tremousaygue D."/>
            <person name="Lescure B."/>
        </authorList>
    </citation>
    <scope>NUCLEOTIDE SEQUENCE [LARGE SCALE MRNA] OF 1-106</scope>
    <source>
        <strain>cv. Columbia</strain>
        <tissue>Seedling</tissue>
    </source>
</reference>
<reference key="8">
    <citation type="journal article" date="1996" name="Plant J.">
        <title>Further progress towards a catalogue of all Arabidopsis genes: analysis of a set of 5000 non-redundant ESTs.</title>
        <authorList>
            <person name="Cooke R."/>
            <person name="Raynal M."/>
            <person name="Laudie M."/>
            <person name="Grellet F."/>
            <person name="Delseny M."/>
            <person name="Morris P.-C."/>
            <person name="Guerrier D."/>
            <person name="Giraudat J."/>
            <person name="Quigley F."/>
            <person name="Clabault G."/>
            <person name="Li Y.-F."/>
            <person name="Mache R."/>
            <person name="Krivitzky M."/>
            <person name="Gy I.J.-J."/>
            <person name="Kreis M."/>
            <person name="Lecharny A."/>
            <person name="Parmentier Y."/>
            <person name="Marbach J."/>
            <person name="Fleck J."/>
            <person name="Clement B."/>
            <person name="Philipps G."/>
            <person name="Herve C."/>
            <person name="Bardet C."/>
            <person name="Tremousaygue D."/>
            <person name="Lescure B."/>
            <person name="Lacomme C."/>
            <person name="Roby D."/>
            <person name="Jourjon M.-F."/>
            <person name="Chabrier P."/>
            <person name="Charpenteau J.-L."/>
            <person name="Desprez T."/>
            <person name="Amselem J."/>
            <person name="Chiapello H."/>
            <person name="Hoefte H."/>
        </authorList>
    </citation>
    <scope>NUCLEOTIDE SEQUENCE [LARGE SCALE MRNA] OF 124-250</scope>
    <source>
        <strain>cv. Columbia</strain>
        <tissue>Shoot</tissue>
    </source>
</reference>
<reference key="9">
    <citation type="journal article" date="2000" name="Proc. Natl. Acad. Sci. U.S.A.">
        <title>Random GFP::cDNA fusions enable visualization of subcellular structures in cells of Arabidopsis at a high frequency.</title>
        <authorList>
            <person name="Cutler S.R."/>
            <person name="Ehrhardt D.W."/>
            <person name="Griffitts J.S."/>
            <person name="Somerville C.R."/>
        </authorList>
    </citation>
    <scope>SUBCELLULAR LOCATION</scope>
</reference>
<reference key="10">
    <citation type="journal article" date="2002" name="Genome Biol.">
        <title>From genome to function: the Arabidopsis aquaporins.</title>
        <authorList>
            <person name="Quigley F."/>
            <person name="Rosenberg J.M."/>
            <person name="Shachar-Hill Y."/>
            <person name="Bohnert H.J."/>
        </authorList>
    </citation>
    <scope>NOMENCLATURE</scope>
    <scope>TISSUE SPECIFICITY</scope>
</reference>
<reference key="11">
    <citation type="journal article" date="2003" name="Plant Physiol.">
        <title>Urea transport by nitrogen-regulated tonoplast intrinsic proteins in Arabidopsis.</title>
        <authorList>
            <person name="Liu L.-H."/>
            <person name="Ludewig U."/>
            <person name="Gassert B."/>
            <person name="Frommer W.B."/>
            <person name="von Wiren N."/>
        </authorList>
    </citation>
    <scope>FUNCTION</scope>
    <scope>SUBCELLULAR LOCATION</scope>
    <scope>DEVELOPMENTAL STAGE</scope>
</reference>
<reference key="12">
    <citation type="journal article" date="2005" name="Plant Physiol.">
        <title>Tonoplast intrinsic proteins AtTIP2;1 and AtTIP2;3 facilitate NH3 transport into the vacuole.</title>
        <authorList>
            <person name="Loque D."/>
            <person name="Ludewig U."/>
            <person name="Yuan L."/>
            <person name="von Wiren N."/>
        </authorList>
    </citation>
    <scope>FUNCTION</scope>
    <scope>INDUCTION</scope>
</reference>
<reference key="13">
    <citation type="journal article" date="2006" name="J. Gen. Virol.">
        <title>Arabidopsis tonoplast proteins TIP1 and TIP2 interact with the cucumber mosaic virus 1a replication protein.</title>
        <authorList>
            <person name="Kim M.J."/>
            <person name="Kim H.R."/>
            <person name="Paek K.-H."/>
        </authorList>
    </citation>
    <scope>INTERACTION WITH CMV PROTEIN 1A</scope>
</reference>
<reference key="14">
    <citation type="journal article" date="2007" name="Mol. Cell. Proteomics">
        <title>A proteomics dissection of Arabidopsis thaliana vacuoles isolated from cell culture.</title>
        <authorList>
            <person name="Jaquinod M."/>
            <person name="Villiers F."/>
            <person name="Kieffer-Jaquinod S."/>
            <person name="Hugouvieux V."/>
            <person name="Bruley C."/>
            <person name="Garin J."/>
            <person name="Bourguignon J."/>
        </authorList>
    </citation>
    <scope>IDENTIFICATION BY MASS SPECTROMETRY</scope>
    <scope>SUBCELLULAR LOCATION [LARGE SCALE ANALYSIS]</scope>
</reference>
<reference key="15">
    <citation type="journal article" date="2012" name="Mol. Cell. Proteomics">
        <title>Comparative large-scale characterisation of plant vs. mammal proteins reveals similar and idiosyncratic N-alpha acetylation features.</title>
        <authorList>
            <person name="Bienvenut W.V."/>
            <person name="Sumpton D."/>
            <person name="Martinez A."/>
            <person name="Lilla S."/>
            <person name="Espagne C."/>
            <person name="Meinnel T."/>
            <person name="Giglione C."/>
        </authorList>
    </citation>
    <scope>ACETYLATION [LARGE SCALE ANALYSIS] AT ALA-2</scope>
    <scope>CLEAVAGE OF INITIATOR METHIONINE [LARGE SCALE ANALYSIS]</scope>
    <scope>IDENTIFICATION BY MASS SPECTROMETRY [LARGE SCALE ANALYSIS]</scope>
</reference>
<gene>
    <name type="primary">TIP2-1</name>
    <name type="ordered locus">At3g16240</name>
    <name type="ORF">MYA6.10</name>
</gene>
<proteinExistence type="evidence at protein level"/>
<organism>
    <name type="scientific">Arabidopsis thaliana</name>
    <name type="common">Mouse-ear cress</name>
    <dbReference type="NCBI Taxonomy" id="3702"/>
    <lineage>
        <taxon>Eukaryota</taxon>
        <taxon>Viridiplantae</taxon>
        <taxon>Streptophyta</taxon>
        <taxon>Embryophyta</taxon>
        <taxon>Tracheophyta</taxon>
        <taxon>Spermatophyta</taxon>
        <taxon>Magnoliopsida</taxon>
        <taxon>eudicotyledons</taxon>
        <taxon>Gunneridae</taxon>
        <taxon>Pentapetalae</taxon>
        <taxon>rosids</taxon>
        <taxon>malvids</taxon>
        <taxon>Brassicales</taxon>
        <taxon>Brassicaceae</taxon>
        <taxon>Camelineae</taxon>
        <taxon>Arabidopsis</taxon>
    </lineage>
</organism>
<sequence length="250" mass="25027">MAGVAFGSFDDSFSLASLRAYLAEFISTLLFVFAGVGSAIAYAKLTSDAALDTPGLVAIAVCHGFALFVAVAIGANISGGHVNPAVTFGLAVGGQITVITGVFYWIAQLLGSTAACFLLKYVTGGLAVPTHSVAAGLGSIEGVVMEIIITFALVYTVYATAADPKKGSLGTIAPLAIGLIVGANILAAGPFSGGSMNPARSFGPAVAAGDFSGHWVYWVGPLIGGGLAGLIYGNVFMGSSEHVPLASADF</sequence>
<evidence type="ECO:0000250" key="1"/>
<evidence type="ECO:0000250" key="2">
    <source>
        <dbReference type="UniProtKB" id="P61837"/>
    </source>
</evidence>
<evidence type="ECO:0000255" key="3"/>
<evidence type="ECO:0000269" key="4">
    <source>
    </source>
</evidence>
<evidence type="ECO:0000269" key="5">
    <source>
    </source>
</evidence>
<evidence type="ECO:0000269" key="6">
    <source>
    </source>
</evidence>
<evidence type="ECO:0000269" key="7">
    <source>
    </source>
</evidence>
<evidence type="ECO:0000269" key="8">
    <source>
    </source>
</evidence>
<evidence type="ECO:0000269" key="9">
    <source>
    </source>
</evidence>
<evidence type="ECO:0000269" key="10">
    <source>
    </source>
</evidence>
<evidence type="ECO:0000305" key="11"/>
<evidence type="ECO:0007744" key="12">
    <source>
    </source>
</evidence>
<evidence type="ECO:0007829" key="13">
    <source>
        <dbReference type="PDB" id="5I32"/>
    </source>
</evidence>
<comment type="function">
    <text evidence="6 7 10">Aquaporin required to facilitate the transport of water from the vacuolar compartment to the cytoplasm. Does not promote glycerol permeability. Its function is impaired by Hg(2+). Transports urea in yeast cells and Xenopus laevis oocytes in a pH-independent manner. Transports methylammonium or ammonium in yeast cells and Xenopus laevis oocytes, preferentially at high medium pH. May participate in vacuolar compartmentation and detoxification of ammonium.</text>
</comment>
<comment type="subunit">
    <text evidence="8">Interacts with cucumber mosaic virus (CMV) Protein 1a.</text>
</comment>
<comment type="interaction">
    <interactant intactId="EBI-4442669">
        <id>Q41951</id>
    </interactant>
    <interactant intactId="EBI-4442669">
        <id>Q41951</id>
        <label>TIP2-1</label>
    </interactant>
    <organismsDiffer>false</organismsDiffer>
    <experiments>2</experiments>
</comment>
<comment type="subcellular location">
    <subcellularLocation>
        <location evidence="4 6 9 10">Vacuole membrane</location>
        <topology evidence="3 4 6 10">Multi-pass membrane protein</topology>
    </subcellularLocation>
    <text evidence="1">Tonoplast. It is specifically located in the tonoplast of protein storage vacuoles (PSV) (By similarity).</text>
</comment>
<comment type="tissue specificity">
    <text evidence="5 10">Strongly expressed in shoot, rosette, bolt and flowers. Also expressed in roots, flower buds and above ground.</text>
</comment>
<comment type="developmental stage">
    <text evidence="6">Starts to be expressed in seedlings from 2 days ays after germination.</text>
</comment>
<comment type="induction">
    <text evidence="7">By ammonium nitrate in roots. Expressed in roots with a circadian rhythm showing an increase after onset of light, a peak approximately at midday and a decline to lowest levels before offset of light.</text>
</comment>
<comment type="domain">
    <text>Aquaporins contain two tandem repeats each containing three membrane-spanning domains and a pore-forming loop with the signature motif Asn-Pro-Ala (NPA).</text>
</comment>
<comment type="similarity">
    <text evidence="11">Belongs to the MIP/aquaporin (TC 1.A.8) family. TIP (TC 1.A.8.10) subfamily.</text>
</comment>
<comment type="caution">
    <text evidence="11">Was originally assigned as At3g16230, which is now a completely different protein not related to aquaporins.</text>
</comment>
<comment type="sequence caution" evidence="11">
    <conflict type="erroneous initiation">
        <sequence resource="EMBL-CDS" id="CAA79093"/>
    </conflict>
</comment>
<comment type="sequence caution" evidence="11">
    <conflict type="erroneous initiation">
        <sequence resource="EMBL-CDS" id="CAA82298"/>
    </conflict>
</comment>
<accession>Q41951</accession>
<accession>Q0WM76</accession>
<accession>Q42200</accession>
<accession>Q42201</accession>
<accession>Q43352</accession>
<accession>Q8VZ81</accession>